<gene>
    <name evidence="1" type="primary">rpsP</name>
    <name type="ordered locus">PsycPRwf_0200</name>
</gene>
<proteinExistence type="inferred from homology"/>
<comment type="similarity">
    <text evidence="1">Belongs to the bacterial ribosomal protein bS16 family.</text>
</comment>
<keyword id="KW-0687">Ribonucleoprotein</keyword>
<keyword id="KW-0689">Ribosomal protein</keyword>
<sequence>MVVIRLARGGAKKRPFYQVVVADQRRSRDGRYIENLGFYNPLAKGQEVELRLDMDAYNAWIEKGAQPSDRVKALAKGYKPTTEEATA</sequence>
<feature type="chain" id="PRO_1000072198" description="Small ribosomal subunit protein bS16">
    <location>
        <begin position="1"/>
        <end position="87"/>
    </location>
</feature>
<protein>
    <recommendedName>
        <fullName evidence="1">Small ribosomal subunit protein bS16</fullName>
    </recommendedName>
    <alternativeName>
        <fullName evidence="2">30S ribosomal protein S16</fullName>
    </alternativeName>
</protein>
<accession>A5WBW8</accession>
<reference key="1">
    <citation type="submission" date="2007-05" db="EMBL/GenBank/DDBJ databases">
        <title>Complete sequence of chromosome of Psychrobacter sp. PRwf-1.</title>
        <authorList>
            <consortium name="US DOE Joint Genome Institute"/>
            <person name="Copeland A."/>
            <person name="Lucas S."/>
            <person name="Lapidus A."/>
            <person name="Barry K."/>
            <person name="Detter J.C."/>
            <person name="Glavina del Rio T."/>
            <person name="Hammon N."/>
            <person name="Israni S."/>
            <person name="Dalin E."/>
            <person name="Tice H."/>
            <person name="Pitluck S."/>
            <person name="Chain P."/>
            <person name="Malfatti S."/>
            <person name="Shin M."/>
            <person name="Vergez L."/>
            <person name="Schmutz J."/>
            <person name="Larimer F."/>
            <person name="Land M."/>
            <person name="Hauser L."/>
            <person name="Kyrpides N."/>
            <person name="Kim E."/>
            <person name="Tiedje J."/>
            <person name="Richardson P."/>
        </authorList>
    </citation>
    <scope>NUCLEOTIDE SEQUENCE [LARGE SCALE GENOMIC DNA]</scope>
    <source>
        <strain>PRwf-1</strain>
    </source>
</reference>
<organism>
    <name type="scientific">Psychrobacter sp. (strain PRwf-1)</name>
    <dbReference type="NCBI Taxonomy" id="349106"/>
    <lineage>
        <taxon>Bacteria</taxon>
        <taxon>Pseudomonadati</taxon>
        <taxon>Pseudomonadota</taxon>
        <taxon>Gammaproteobacteria</taxon>
        <taxon>Moraxellales</taxon>
        <taxon>Moraxellaceae</taxon>
        <taxon>Psychrobacter</taxon>
    </lineage>
</organism>
<dbReference type="EMBL" id="CP000713">
    <property type="protein sequence ID" value="ABQ93159.1"/>
    <property type="molecule type" value="Genomic_DNA"/>
</dbReference>
<dbReference type="SMR" id="A5WBW8"/>
<dbReference type="STRING" id="349106.PsycPRwf_0200"/>
<dbReference type="KEGG" id="prw:PsycPRwf_0200"/>
<dbReference type="eggNOG" id="COG0228">
    <property type="taxonomic scope" value="Bacteria"/>
</dbReference>
<dbReference type="HOGENOM" id="CLU_100590_5_1_6"/>
<dbReference type="GO" id="GO:0005737">
    <property type="term" value="C:cytoplasm"/>
    <property type="evidence" value="ECO:0007669"/>
    <property type="project" value="UniProtKB-ARBA"/>
</dbReference>
<dbReference type="GO" id="GO:0015935">
    <property type="term" value="C:small ribosomal subunit"/>
    <property type="evidence" value="ECO:0007669"/>
    <property type="project" value="TreeGrafter"/>
</dbReference>
<dbReference type="GO" id="GO:0003735">
    <property type="term" value="F:structural constituent of ribosome"/>
    <property type="evidence" value="ECO:0007669"/>
    <property type="project" value="InterPro"/>
</dbReference>
<dbReference type="GO" id="GO:0006412">
    <property type="term" value="P:translation"/>
    <property type="evidence" value="ECO:0007669"/>
    <property type="project" value="UniProtKB-UniRule"/>
</dbReference>
<dbReference type="Gene3D" id="3.30.1320.10">
    <property type="match status" value="1"/>
</dbReference>
<dbReference type="HAMAP" id="MF_00385">
    <property type="entry name" value="Ribosomal_bS16"/>
    <property type="match status" value="1"/>
</dbReference>
<dbReference type="InterPro" id="IPR000307">
    <property type="entry name" value="Ribosomal_bS16"/>
</dbReference>
<dbReference type="InterPro" id="IPR020592">
    <property type="entry name" value="Ribosomal_bS16_CS"/>
</dbReference>
<dbReference type="InterPro" id="IPR023803">
    <property type="entry name" value="Ribosomal_bS16_dom_sf"/>
</dbReference>
<dbReference type="NCBIfam" id="TIGR00002">
    <property type="entry name" value="S16"/>
    <property type="match status" value="1"/>
</dbReference>
<dbReference type="PANTHER" id="PTHR12919">
    <property type="entry name" value="30S RIBOSOMAL PROTEIN S16"/>
    <property type="match status" value="1"/>
</dbReference>
<dbReference type="PANTHER" id="PTHR12919:SF20">
    <property type="entry name" value="SMALL RIBOSOMAL SUBUNIT PROTEIN BS16M"/>
    <property type="match status" value="1"/>
</dbReference>
<dbReference type="Pfam" id="PF00886">
    <property type="entry name" value="Ribosomal_S16"/>
    <property type="match status" value="1"/>
</dbReference>
<dbReference type="SUPFAM" id="SSF54565">
    <property type="entry name" value="Ribosomal protein S16"/>
    <property type="match status" value="1"/>
</dbReference>
<dbReference type="PROSITE" id="PS00732">
    <property type="entry name" value="RIBOSOMAL_S16"/>
    <property type="match status" value="1"/>
</dbReference>
<evidence type="ECO:0000255" key="1">
    <source>
        <dbReference type="HAMAP-Rule" id="MF_00385"/>
    </source>
</evidence>
<evidence type="ECO:0000305" key="2"/>
<name>RS16_PSYWF</name>